<organism>
    <name type="scientific">Xylella fastidiosa (strain Temecula1 / ATCC 700964)</name>
    <dbReference type="NCBI Taxonomy" id="183190"/>
    <lineage>
        <taxon>Bacteria</taxon>
        <taxon>Pseudomonadati</taxon>
        <taxon>Pseudomonadota</taxon>
        <taxon>Gammaproteobacteria</taxon>
        <taxon>Lysobacterales</taxon>
        <taxon>Lysobacteraceae</taxon>
        <taxon>Xylella</taxon>
    </lineage>
</organism>
<accession>Q87BQ1</accession>
<sequence length="357" mass="38379">MSKKILILPGDGIGHEIVAEAVKVLEHVNVRHTLNMRLSFDALGGAAYEKYGSPLADETLARAREADAVLLGAVGGPQWDTIDPALRPERGLLKIRAQLGLFANLRPALLYPQLADASTLKPEVVAGLDILIVRELTGGLYFGQPRGSRISKNGEREAFDTLPYCESEIRRILKVGFEMARLRGKKLCSVDKANVLASSQLWRTVAGEMAKDYPDVTLSHMYVDNAAMQLVRYPKQFDVIVTENMFGDILSDQASMLTGSIGMLPSASLDANNKGMYEPCHGSAPDIAGQGVANPLATILSVAMLLRYGMGYIKTADAIEYAVGVVLDSGLRTADIWSEGMTKVGTVAMGDAVVAAL</sequence>
<proteinExistence type="inferred from homology"/>
<dbReference type="EC" id="1.1.1.85" evidence="1"/>
<dbReference type="EMBL" id="AE009442">
    <property type="protein sequence ID" value="AAO29244.1"/>
    <property type="molecule type" value="Genomic_DNA"/>
</dbReference>
<dbReference type="RefSeq" id="WP_011098088.1">
    <property type="nucleotide sequence ID" value="NC_004556.1"/>
</dbReference>
<dbReference type="SMR" id="Q87BQ1"/>
<dbReference type="KEGG" id="xft:PD_1397"/>
<dbReference type="HOGENOM" id="CLU_031953_0_3_6"/>
<dbReference type="UniPathway" id="UPA00048">
    <property type="reaction ID" value="UER00072"/>
</dbReference>
<dbReference type="Proteomes" id="UP000002516">
    <property type="component" value="Chromosome"/>
</dbReference>
<dbReference type="GO" id="GO:0005829">
    <property type="term" value="C:cytosol"/>
    <property type="evidence" value="ECO:0007669"/>
    <property type="project" value="TreeGrafter"/>
</dbReference>
<dbReference type="GO" id="GO:0003862">
    <property type="term" value="F:3-isopropylmalate dehydrogenase activity"/>
    <property type="evidence" value="ECO:0007669"/>
    <property type="project" value="UniProtKB-UniRule"/>
</dbReference>
<dbReference type="GO" id="GO:0000287">
    <property type="term" value="F:magnesium ion binding"/>
    <property type="evidence" value="ECO:0007669"/>
    <property type="project" value="InterPro"/>
</dbReference>
<dbReference type="GO" id="GO:0051287">
    <property type="term" value="F:NAD binding"/>
    <property type="evidence" value="ECO:0007669"/>
    <property type="project" value="InterPro"/>
</dbReference>
<dbReference type="GO" id="GO:0009098">
    <property type="term" value="P:L-leucine biosynthetic process"/>
    <property type="evidence" value="ECO:0007669"/>
    <property type="project" value="UniProtKB-UniRule"/>
</dbReference>
<dbReference type="FunFam" id="3.40.718.10:FF:000028">
    <property type="entry name" value="3-isopropylmalate dehydrogenase"/>
    <property type="match status" value="1"/>
</dbReference>
<dbReference type="Gene3D" id="3.40.718.10">
    <property type="entry name" value="Isopropylmalate Dehydrogenase"/>
    <property type="match status" value="1"/>
</dbReference>
<dbReference type="HAMAP" id="MF_01033">
    <property type="entry name" value="LeuB_type1"/>
    <property type="match status" value="1"/>
</dbReference>
<dbReference type="InterPro" id="IPR019818">
    <property type="entry name" value="IsoCit/isopropylmalate_DH_CS"/>
</dbReference>
<dbReference type="InterPro" id="IPR024084">
    <property type="entry name" value="IsoPropMal-DH-like_dom"/>
</dbReference>
<dbReference type="InterPro" id="IPR004429">
    <property type="entry name" value="Isopropylmalate_DH"/>
</dbReference>
<dbReference type="NCBIfam" id="TIGR00169">
    <property type="entry name" value="leuB"/>
    <property type="match status" value="1"/>
</dbReference>
<dbReference type="PANTHER" id="PTHR42979">
    <property type="entry name" value="3-ISOPROPYLMALATE DEHYDROGENASE"/>
    <property type="match status" value="1"/>
</dbReference>
<dbReference type="PANTHER" id="PTHR42979:SF1">
    <property type="entry name" value="3-ISOPROPYLMALATE DEHYDROGENASE"/>
    <property type="match status" value="1"/>
</dbReference>
<dbReference type="Pfam" id="PF00180">
    <property type="entry name" value="Iso_dh"/>
    <property type="match status" value="1"/>
</dbReference>
<dbReference type="SMART" id="SM01329">
    <property type="entry name" value="Iso_dh"/>
    <property type="match status" value="1"/>
</dbReference>
<dbReference type="SUPFAM" id="SSF53659">
    <property type="entry name" value="Isocitrate/Isopropylmalate dehydrogenase-like"/>
    <property type="match status" value="1"/>
</dbReference>
<dbReference type="PROSITE" id="PS00470">
    <property type="entry name" value="IDH_IMDH"/>
    <property type="match status" value="1"/>
</dbReference>
<name>LEU3_XYLFT</name>
<comment type="function">
    <text evidence="1">Catalyzes the oxidation of 3-carboxy-2-hydroxy-4-methylpentanoate (3-isopropylmalate) to 3-carboxy-4-methyl-2-oxopentanoate. The product decarboxylates to 4-methyl-2 oxopentanoate.</text>
</comment>
<comment type="catalytic activity">
    <reaction evidence="1">
        <text>(2R,3S)-3-isopropylmalate + NAD(+) = 4-methyl-2-oxopentanoate + CO2 + NADH</text>
        <dbReference type="Rhea" id="RHEA:32271"/>
        <dbReference type="ChEBI" id="CHEBI:16526"/>
        <dbReference type="ChEBI" id="CHEBI:17865"/>
        <dbReference type="ChEBI" id="CHEBI:35121"/>
        <dbReference type="ChEBI" id="CHEBI:57540"/>
        <dbReference type="ChEBI" id="CHEBI:57945"/>
        <dbReference type="EC" id="1.1.1.85"/>
    </reaction>
</comment>
<comment type="cofactor">
    <cofactor evidence="1">
        <name>Mg(2+)</name>
        <dbReference type="ChEBI" id="CHEBI:18420"/>
    </cofactor>
    <cofactor evidence="1">
        <name>Mn(2+)</name>
        <dbReference type="ChEBI" id="CHEBI:29035"/>
    </cofactor>
    <text evidence="1">Binds 1 Mg(2+) or Mn(2+) ion per subunit.</text>
</comment>
<comment type="pathway">
    <text evidence="1">Amino-acid biosynthesis; L-leucine biosynthesis; L-leucine from 3-methyl-2-oxobutanoate: step 3/4.</text>
</comment>
<comment type="subunit">
    <text evidence="1">Homodimer.</text>
</comment>
<comment type="subcellular location">
    <subcellularLocation>
        <location evidence="1">Cytoplasm</location>
    </subcellularLocation>
</comment>
<comment type="similarity">
    <text evidence="1">Belongs to the isocitrate and isopropylmalate dehydrogenases family. LeuB type 1 subfamily.</text>
</comment>
<protein>
    <recommendedName>
        <fullName evidence="1">3-isopropylmalate dehydrogenase</fullName>
        <ecNumber evidence="1">1.1.1.85</ecNumber>
    </recommendedName>
    <alternativeName>
        <fullName evidence="1">3-IPM-DH</fullName>
    </alternativeName>
    <alternativeName>
        <fullName evidence="1">Beta-IPM dehydrogenase</fullName>
        <shortName evidence="1">IMDH</shortName>
    </alternativeName>
</protein>
<keyword id="KW-0028">Amino-acid biosynthesis</keyword>
<keyword id="KW-0100">Branched-chain amino acid biosynthesis</keyword>
<keyword id="KW-0963">Cytoplasm</keyword>
<keyword id="KW-0432">Leucine biosynthesis</keyword>
<keyword id="KW-0460">Magnesium</keyword>
<keyword id="KW-0464">Manganese</keyword>
<keyword id="KW-0479">Metal-binding</keyword>
<keyword id="KW-0520">NAD</keyword>
<keyword id="KW-0560">Oxidoreductase</keyword>
<keyword id="KW-1185">Reference proteome</keyword>
<feature type="chain" id="PRO_0000083790" description="3-isopropylmalate dehydrogenase">
    <location>
        <begin position="1"/>
        <end position="357"/>
    </location>
</feature>
<feature type="binding site" evidence="1">
    <location>
        <begin position="76"/>
        <end position="89"/>
    </location>
    <ligand>
        <name>NAD(+)</name>
        <dbReference type="ChEBI" id="CHEBI:57540"/>
    </ligand>
</feature>
<feature type="binding site" evidence="1">
    <location>
        <position position="96"/>
    </location>
    <ligand>
        <name>substrate</name>
    </ligand>
</feature>
<feature type="binding site" evidence="1">
    <location>
        <position position="106"/>
    </location>
    <ligand>
        <name>substrate</name>
    </ligand>
</feature>
<feature type="binding site" evidence="1">
    <location>
        <position position="134"/>
    </location>
    <ligand>
        <name>substrate</name>
    </ligand>
</feature>
<feature type="binding site" evidence="1">
    <location>
        <position position="224"/>
    </location>
    <ligand>
        <name>Mg(2+)</name>
        <dbReference type="ChEBI" id="CHEBI:18420"/>
    </ligand>
</feature>
<feature type="binding site" evidence="1">
    <location>
        <position position="224"/>
    </location>
    <ligand>
        <name>substrate</name>
    </ligand>
</feature>
<feature type="binding site" evidence="1">
    <location>
        <position position="248"/>
    </location>
    <ligand>
        <name>Mg(2+)</name>
        <dbReference type="ChEBI" id="CHEBI:18420"/>
    </ligand>
</feature>
<feature type="binding site" evidence="1">
    <location>
        <position position="252"/>
    </location>
    <ligand>
        <name>Mg(2+)</name>
        <dbReference type="ChEBI" id="CHEBI:18420"/>
    </ligand>
</feature>
<feature type="binding site" evidence="1">
    <location>
        <begin position="282"/>
        <end position="294"/>
    </location>
    <ligand>
        <name>NAD(+)</name>
        <dbReference type="ChEBI" id="CHEBI:57540"/>
    </ligand>
</feature>
<feature type="site" description="Important for catalysis" evidence="1">
    <location>
        <position position="141"/>
    </location>
</feature>
<feature type="site" description="Important for catalysis" evidence="1">
    <location>
        <position position="192"/>
    </location>
</feature>
<evidence type="ECO:0000255" key="1">
    <source>
        <dbReference type="HAMAP-Rule" id="MF_01033"/>
    </source>
</evidence>
<reference key="1">
    <citation type="journal article" date="2003" name="J. Bacteriol.">
        <title>Comparative analyses of the complete genome sequences of Pierce's disease and citrus variegated chlorosis strains of Xylella fastidiosa.</title>
        <authorList>
            <person name="Van Sluys M.A."/>
            <person name="de Oliveira M.C."/>
            <person name="Monteiro-Vitorello C.B."/>
            <person name="Miyaki C.Y."/>
            <person name="Furlan L.R."/>
            <person name="Camargo L.E.A."/>
            <person name="da Silva A.C.R."/>
            <person name="Moon D.H."/>
            <person name="Takita M.A."/>
            <person name="Lemos E.G.M."/>
            <person name="Machado M.A."/>
            <person name="Ferro M.I.T."/>
            <person name="da Silva F.R."/>
            <person name="Goldman M.H.S."/>
            <person name="Goldman G.H."/>
            <person name="Lemos M.V.F."/>
            <person name="El-Dorry H."/>
            <person name="Tsai S.M."/>
            <person name="Carrer H."/>
            <person name="Carraro D.M."/>
            <person name="de Oliveira R.C."/>
            <person name="Nunes L.R."/>
            <person name="Siqueira W.J."/>
            <person name="Coutinho L.L."/>
            <person name="Kimura E.T."/>
            <person name="Ferro E.S."/>
            <person name="Harakava R."/>
            <person name="Kuramae E.E."/>
            <person name="Marino C.L."/>
            <person name="Giglioti E."/>
            <person name="Abreu I.L."/>
            <person name="Alves L.M.C."/>
            <person name="do Amaral A.M."/>
            <person name="Baia G.S."/>
            <person name="Blanco S.R."/>
            <person name="Brito M.S."/>
            <person name="Cannavan F.S."/>
            <person name="Celestino A.V."/>
            <person name="da Cunha A.F."/>
            <person name="Fenille R.C."/>
            <person name="Ferro J.A."/>
            <person name="Formighieri E.F."/>
            <person name="Kishi L.T."/>
            <person name="Leoni S.G."/>
            <person name="Oliveira A.R."/>
            <person name="Rosa V.E. Jr."/>
            <person name="Sassaki F.T."/>
            <person name="Sena J.A.D."/>
            <person name="de Souza A.A."/>
            <person name="Truffi D."/>
            <person name="Tsukumo F."/>
            <person name="Yanai G.M."/>
            <person name="Zaros L.G."/>
            <person name="Civerolo E.L."/>
            <person name="Simpson A.J.G."/>
            <person name="Almeida N.F. Jr."/>
            <person name="Setubal J.C."/>
            <person name="Kitajima J.P."/>
        </authorList>
    </citation>
    <scope>NUCLEOTIDE SEQUENCE [LARGE SCALE GENOMIC DNA]</scope>
    <source>
        <strain>Temecula1 / ATCC 700964</strain>
    </source>
</reference>
<gene>
    <name evidence="1" type="primary">leuB</name>
    <name type="ordered locus">PD_1397</name>
</gene>